<dbReference type="EMBL" id="CP000730">
    <property type="protein sequence ID" value="ABX28667.1"/>
    <property type="molecule type" value="Genomic_DNA"/>
</dbReference>
<dbReference type="RefSeq" id="WP_001048985.1">
    <property type="nucleotide sequence ID" value="NC_010079.1"/>
</dbReference>
<dbReference type="SMR" id="A8Z146"/>
<dbReference type="KEGG" id="sax:USA300HOU_0645"/>
<dbReference type="HOGENOM" id="CLU_082058_3_1_9"/>
<dbReference type="GO" id="GO:0005886">
    <property type="term" value="C:plasma membrane"/>
    <property type="evidence" value="ECO:0007669"/>
    <property type="project" value="UniProtKB-SubCell"/>
</dbReference>
<dbReference type="GO" id="GO:0015297">
    <property type="term" value="F:antiporter activity"/>
    <property type="evidence" value="ECO:0007669"/>
    <property type="project" value="UniProtKB-KW"/>
</dbReference>
<dbReference type="GO" id="GO:0006811">
    <property type="term" value="P:monoatomic ion transport"/>
    <property type="evidence" value="ECO:0007669"/>
    <property type="project" value="UniProtKB-KW"/>
</dbReference>
<dbReference type="Gene3D" id="1.10.287.3510">
    <property type="match status" value="1"/>
</dbReference>
<dbReference type="InterPro" id="IPR050601">
    <property type="entry name" value="CPA3_antiporter_subunitC"/>
</dbReference>
<dbReference type="InterPro" id="IPR039428">
    <property type="entry name" value="NUOK/Mnh_C1-like"/>
</dbReference>
<dbReference type="NCBIfam" id="NF009303">
    <property type="entry name" value="PRK12660.1"/>
    <property type="match status" value="1"/>
</dbReference>
<dbReference type="PANTHER" id="PTHR34583">
    <property type="entry name" value="ANTIPORTER SUBUNIT MNHC2-RELATED"/>
    <property type="match status" value="1"/>
</dbReference>
<dbReference type="PANTHER" id="PTHR34583:SF2">
    <property type="entry name" value="ANTIPORTER SUBUNIT MNHC2-RELATED"/>
    <property type="match status" value="1"/>
</dbReference>
<dbReference type="Pfam" id="PF00420">
    <property type="entry name" value="Oxidored_q2"/>
    <property type="match status" value="1"/>
</dbReference>
<proteinExistence type="inferred from homology"/>
<evidence type="ECO:0000250" key="1"/>
<evidence type="ECO:0000255" key="2"/>
<evidence type="ECO:0000305" key="3"/>
<gene>
    <name type="primary">mnhC2</name>
    <name type="synonym">mrpC2</name>
    <name type="ordered locus">USA300HOU_0645</name>
</gene>
<accession>A8Z146</accession>
<keyword id="KW-0050">Antiport</keyword>
<keyword id="KW-1003">Cell membrane</keyword>
<keyword id="KW-0406">Ion transport</keyword>
<keyword id="KW-0472">Membrane</keyword>
<keyword id="KW-0812">Transmembrane</keyword>
<keyword id="KW-1133">Transmembrane helix</keyword>
<keyword id="KW-0813">Transport</keyword>
<comment type="subunit">
    <text evidence="1">May form a heterooligomeric complex that consists of seven subunits: mnhA2, mnhB2, mnhC2, mnhD2, mnhE2, mnhF2 and mnhG2.</text>
</comment>
<comment type="subcellular location">
    <subcellularLocation>
        <location evidence="3">Cell membrane</location>
        <topology evidence="3">Multi-pass membrane protein</topology>
    </subcellularLocation>
</comment>
<comment type="similarity">
    <text evidence="3">Belongs to the CPA3 antiporters (TC 2.A.63) subunit C family.</text>
</comment>
<feature type="chain" id="PRO_0000372260" description="Putative antiporter subunit mnhC2">
    <location>
        <begin position="1"/>
        <end position="114"/>
    </location>
</feature>
<feature type="transmembrane region" description="Helical" evidence="2">
    <location>
        <begin position="3"/>
        <end position="23"/>
    </location>
</feature>
<feature type="transmembrane region" description="Helical" evidence="2">
    <location>
        <begin position="28"/>
        <end position="48"/>
    </location>
</feature>
<feature type="transmembrane region" description="Helical" evidence="2">
    <location>
        <begin position="72"/>
        <end position="92"/>
    </location>
</feature>
<name>MNHC2_STAAT</name>
<reference key="1">
    <citation type="journal article" date="2007" name="BMC Microbiol.">
        <title>Subtle genetic changes enhance virulence of methicillin resistant and sensitive Staphylococcus aureus.</title>
        <authorList>
            <person name="Highlander S.K."/>
            <person name="Hulten K.G."/>
            <person name="Qin X."/>
            <person name="Jiang H."/>
            <person name="Yerrapragada S."/>
            <person name="Mason E.O. Jr."/>
            <person name="Shang Y."/>
            <person name="Williams T.M."/>
            <person name="Fortunov R.M."/>
            <person name="Liu Y."/>
            <person name="Igboeli O."/>
            <person name="Petrosino J."/>
            <person name="Tirumalai M."/>
            <person name="Uzman A."/>
            <person name="Fox G.E."/>
            <person name="Cardenas A.M."/>
            <person name="Muzny D.M."/>
            <person name="Hemphill L."/>
            <person name="Ding Y."/>
            <person name="Dugan S."/>
            <person name="Blyth P.R."/>
            <person name="Buhay C.J."/>
            <person name="Dinh H.H."/>
            <person name="Hawes A.C."/>
            <person name="Holder M."/>
            <person name="Kovar C.L."/>
            <person name="Lee S.L."/>
            <person name="Liu W."/>
            <person name="Nazareth L.V."/>
            <person name="Wang Q."/>
            <person name="Zhou J."/>
            <person name="Kaplan S.L."/>
            <person name="Weinstock G.M."/>
        </authorList>
    </citation>
    <scope>NUCLEOTIDE SEQUENCE [LARGE SCALE GENOMIC DNA]</scope>
    <source>
        <strain>USA300 / TCH1516</strain>
    </source>
</reference>
<sequence>MNLILLLVIGFLVFIGTYMILSINLIRIVIGISIYTHAGNLIIMSMGTYGSSRSEPLITGGNQLFVDPLLQAIVLTAIVIGFGMTAFLLVLVYRTYKVTKEDEIEGLRGEDDAK</sequence>
<organism>
    <name type="scientific">Staphylococcus aureus (strain USA300 / TCH1516)</name>
    <dbReference type="NCBI Taxonomy" id="451516"/>
    <lineage>
        <taxon>Bacteria</taxon>
        <taxon>Bacillati</taxon>
        <taxon>Bacillota</taxon>
        <taxon>Bacilli</taxon>
        <taxon>Bacillales</taxon>
        <taxon>Staphylococcaceae</taxon>
        <taxon>Staphylococcus</taxon>
    </lineage>
</organism>
<protein>
    <recommendedName>
        <fullName>Putative antiporter subunit mnhC2</fullName>
    </recommendedName>
    <alternativeName>
        <fullName>Mrp complex subunit C2</fullName>
    </alternativeName>
    <alternativeName>
        <fullName>Putative NADH-ubiquinone oxidoreductase subunit mnhC2</fullName>
    </alternativeName>
</protein>